<comment type="function">
    <text evidence="1">Forms part of the ribosomal stalk which helps the ribosome interact with GTP-bound translation factors. Is thus essential for accurate translation.</text>
</comment>
<comment type="subunit">
    <text evidence="1">Homodimer. Part of the ribosomal stalk of the 50S ribosomal subunit. Forms a multimeric L10(L12)X complex, where L10 forms an elongated spine to which 2 to 4 L12 dimers bind in a sequential fashion. Binds GTP-bound translation factors.</text>
</comment>
<comment type="similarity">
    <text evidence="1">Belongs to the bacterial ribosomal protein bL12 family.</text>
</comment>
<name>RL7_BORPD</name>
<protein>
    <recommendedName>
        <fullName evidence="1">Large ribosomal subunit protein bL12</fullName>
    </recommendedName>
    <alternativeName>
        <fullName evidence="2">50S ribosomal protein L7/L12</fullName>
    </alternativeName>
</protein>
<keyword id="KW-0687">Ribonucleoprotein</keyword>
<keyword id="KW-0689">Ribosomal protein</keyword>
<accession>A9IJ27</accession>
<gene>
    <name evidence="1" type="primary">rplL</name>
    <name type="ordered locus">Bpet4966</name>
</gene>
<feature type="chain" id="PRO_1000121398" description="Large ribosomal subunit protein bL12">
    <location>
        <begin position="1"/>
        <end position="126"/>
    </location>
</feature>
<dbReference type="EMBL" id="AM902716">
    <property type="protein sequence ID" value="CAP45318.1"/>
    <property type="molecule type" value="Genomic_DNA"/>
</dbReference>
<dbReference type="SMR" id="A9IJ27"/>
<dbReference type="STRING" id="94624.Bpet4966"/>
<dbReference type="KEGG" id="bpt:Bpet4966"/>
<dbReference type="eggNOG" id="COG0222">
    <property type="taxonomic scope" value="Bacteria"/>
</dbReference>
<dbReference type="Proteomes" id="UP000001225">
    <property type="component" value="Chromosome"/>
</dbReference>
<dbReference type="GO" id="GO:0022625">
    <property type="term" value="C:cytosolic large ribosomal subunit"/>
    <property type="evidence" value="ECO:0007669"/>
    <property type="project" value="TreeGrafter"/>
</dbReference>
<dbReference type="GO" id="GO:0003729">
    <property type="term" value="F:mRNA binding"/>
    <property type="evidence" value="ECO:0007669"/>
    <property type="project" value="TreeGrafter"/>
</dbReference>
<dbReference type="GO" id="GO:0003735">
    <property type="term" value="F:structural constituent of ribosome"/>
    <property type="evidence" value="ECO:0007669"/>
    <property type="project" value="InterPro"/>
</dbReference>
<dbReference type="GO" id="GO:0006412">
    <property type="term" value="P:translation"/>
    <property type="evidence" value="ECO:0007669"/>
    <property type="project" value="UniProtKB-UniRule"/>
</dbReference>
<dbReference type="CDD" id="cd00387">
    <property type="entry name" value="Ribosomal_L7_L12"/>
    <property type="match status" value="1"/>
</dbReference>
<dbReference type="FunFam" id="3.30.1390.10:FF:000001">
    <property type="entry name" value="50S ribosomal protein L7/L12"/>
    <property type="match status" value="1"/>
</dbReference>
<dbReference type="Gene3D" id="3.30.1390.10">
    <property type="match status" value="1"/>
</dbReference>
<dbReference type="Gene3D" id="1.20.5.710">
    <property type="entry name" value="Single helix bin"/>
    <property type="match status" value="1"/>
</dbReference>
<dbReference type="HAMAP" id="MF_00368">
    <property type="entry name" value="Ribosomal_bL12"/>
    <property type="match status" value="1"/>
</dbReference>
<dbReference type="InterPro" id="IPR000206">
    <property type="entry name" value="Ribosomal_bL12"/>
</dbReference>
<dbReference type="InterPro" id="IPR013823">
    <property type="entry name" value="Ribosomal_bL12_C"/>
</dbReference>
<dbReference type="InterPro" id="IPR014719">
    <property type="entry name" value="Ribosomal_bL12_C/ClpS-like"/>
</dbReference>
<dbReference type="InterPro" id="IPR008932">
    <property type="entry name" value="Ribosomal_bL12_oligo"/>
</dbReference>
<dbReference type="InterPro" id="IPR036235">
    <property type="entry name" value="Ribosomal_bL12_oligo_N_sf"/>
</dbReference>
<dbReference type="NCBIfam" id="TIGR00855">
    <property type="entry name" value="L12"/>
    <property type="match status" value="1"/>
</dbReference>
<dbReference type="PANTHER" id="PTHR45987">
    <property type="entry name" value="39S RIBOSOMAL PROTEIN L12"/>
    <property type="match status" value="1"/>
</dbReference>
<dbReference type="PANTHER" id="PTHR45987:SF4">
    <property type="entry name" value="LARGE RIBOSOMAL SUBUNIT PROTEIN BL12M"/>
    <property type="match status" value="1"/>
</dbReference>
<dbReference type="Pfam" id="PF00542">
    <property type="entry name" value="Ribosomal_L12"/>
    <property type="match status" value="1"/>
</dbReference>
<dbReference type="Pfam" id="PF16320">
    <property type="entry name" value="Ribosomal_L12_N"/>
    <property type="match status" value="1"/>
</dbReference>
<dbReference type="SUPFAM" id="SSF54736">
    <property type="entry name" value="ClpS-like"/>
    <property type="match status" value="1"/>
</dbReference>
<dbReference type="SUPFAM" id="SSF48300">
    <property type="entry name" value="Ribosomal protein L7/12, oligomerisation (N-terminal) domain"/>
    <property type="match status" value="1"/>
</dbReference>
<organism>
    <name type="scientific">Bordetella petrii (strain ATCC BAA-461 / DSM 12804 / CCUG 43448)</name>
    <dbReference type="NCBI Taxonomy" id="340100"/>
    <lineage>
        <taxon>Bacteria</taxon>
        <taxon>Pseudomonadati</taxon>
        <taxon>Pseudomonadota</taxon>
        <taxon>Betaproteobacteria</taxon>
        <taxon>Burkholderiales</taxon>
        <taxon>Alcaligenaceae</taxon>
        <taxon>Bordetella</taxon>
    </lineage>
</organism>
<reference key="1">
    <citation type="journal article" date="2008" name="BMC Genomics">
        <title>The missing link: Bordetella petrii is endowed with both the metabolic versatility of environmental bacteria and virulence traits of pathogenic Bordetellae.</title>
        <authorList>
            <person name="Gross R."/>
            <person name="Guzman C.A."/>
            <person name="Sebaihia M."/>
            <person name="Martin dos Santos V.A.P."/>
            <person name="Pieper D.H."/>
            <person name="Koebnik R."/>
            <person name="Lechner M."/>
            <person name="Bartels D."/>
            <person name="Buhrmester J."/>
            <person name="Choudhuri J.V."/>
            <person name="Ebensen T."/>
            <person name="Gaigalat L."/>
            <person name="Herrmann S."/>
            <person name="Khachane A.N."/>
            <person name="Larisch C."/>
            <person name="Link S."/>
            <person name="Linke B."/>
            <person name="Meyer F."/>
            <person name="Mormann S."/>
            <person name="Nakunst D."/>
            <person name="Rueckert C."/>
            <person name="Schneiker-Bekel S."/>
            <person name="Schulze K."/>
            <person name="Voerholter F.-J."/>
            <person name="Yevsa T."/>
            <person name="Engle J.T."/>
            <person name="Goldman W.E."/>
            <person name="Puehler A."/>
            <person name="Goebel U.B."/>
            <person name="Goesmann A."/>
            <person name="Bloecker H."/>
            <person name="Kaiser O."/>
            <person name="Martinez-Arias R."/>
        </authorList>
    </citation>
    <scope>NUCLEOTIDE SEQUENCE [LARGE SCALE GENOMIC DNA]</scope>
    <source>
        <strain>ATCC BAA-461 / DSM 12804 / CCUG 43448</strain>
    </source>
</reference>
<proteinExistence type="inferred from homology"/>
<sequence>MALSKAEILDAIAGMTVLELSELIKEMEEKFGVSAAAAAVAVAAPAAGGGAAAAEEQTEFTVVLAEAGANKVSVIKAVRELTGLGLKEAKDLVDGAPKPVKEGIAKADAEAAKKKLEEAGAKVEVK</sequence>
<evidence type="ECO:0000255" key="1">
    <source>
        <dbReference type="HAMAP-Rule" id="MF_00368"/>
    </source>
</evidence>
<evidence type="ECO:0000305" key="2"/>